<dbReference type="EC" id="2.4.2.9" evidence="1"/>
<dbReference type="EMBL" id="CP001186">
    <property type="protein sequence ID" value="ACK96143.1"/>
    <property type="molecule type" value="Genomic_DNA"/>
</dbReference>
<dbReference type="RefSeq" id="WP_000517539.1">
    <property type="nucleotide sequence ID" value="NC_011772.1"/>
</dbReference>
<dbReference type="SMR" id="B7IQW8"/>
<dbReference type="GeneID" id="93005808"/>
<dbReference type="KEGG" id="bcg:BCG9842_B5514"/>
<dbReference type="HOGENOM" id="CLU_067096_2_2_9"/>
<dbReference type="UniPathway" id="UPA00574">
    <property type="reaction ID" value="UER00636"/>
</dbReference>
<dbReference type="Proteomes" id="UP000006744">
    <property type="component" value="Chromosome"/>
</dbReference>
<dbReference type="GO" id="GO:0005525">
    <property type="term" value="F:GTP binding"/>
    <property type="evidence" value="ECO:0007669"/>
    <property type="project" value="UniProtKB-KW"/>
</dbReference>
<dbReference type="GO" id="GO:0000287">
    <property type="term" value="F:magnesium ion binding"/>
    <property type="evidence" value="ECO:0007669"/>
    <property type="project" value="UniProtKB-UniRule"/>
</dbReference>
<dbReference type="GO" id="GO:0004845">
    <property type="term" value="F:uracil phosphoribosyltransferase activity"/>
    <property type="evidence" value="ECO:0007669"/>
    <property type="project" value="UniProtKB-UniRule"/>
</dbReference>
<dbReference type="GO" id="GO:0044206">
    <property type="term" value="P:UMP salvage"/>
    <property type="evidence" value="ECO:0007669"/>
    <property type="project" value="UniProtKB-UniRule"/>
</dbReference>
<dbReference type="GO" id="GO:0006223">
    <property type="term" value="P:uracil salvage"/>
    <property type="evidence" value="ECO:0007669"/>
    <property type="project" value="InterPro"/>
</dbReference>
<dbReference type="CDD" id="cd06223">
    <property type="entry name" value="PRTases_typeI"/>
    <property type="match status" value="1"/>
</dbReference>
<dbReference type="FunFam" id="3.40.50.2020:FF:000003">
    <property type="entry name" value="Uracil phosphoribosyltransferase"/>
    <property type="match status" value="1"/>
</dbReference>
<dbReference type="Gene3D" id="3.40.50.2020">
    <property type="match status" value="1"/>
</dbReference>
<dbReference type="HAMAP" id="MF_01218_B">
    <property type="entry name" value="Upp_B"/>
    <property type="match status" value="1"/>
</dbReference>
<dbReference type="InterPro" id="IPR000836">
    <property type="entry name" value="PRibTrfase_dom"/>
</dbReference>
<dbReference type="InterPro" id="IPR029057">
    <property type="entry name" value="PRTase-like"/>
</dbReference>
<dbReference type="InterPro" id="IPR034332">
    <property type="entry name" value="Upp_B"/>
</dbReference>
<dbReference type="InterPro" id="IPR050054">
    <property type="entry name" value="UPRTase/APRTase"/>
</dbReference>
<dbReference type="InterPro" id="IPR005765">
    <property type="entry name" value="Ura_phspho_trans"/>
</dbReference>
<dbReference type="NCBIfam" id="NF001097">
    <property type="entry name" value="PRK00129.1"/>
    <property type="match status" value="1"/>
</dbReference>
<dbReference type="NCBIfam" id="TIGR01091">
    <property type="entry name" value="upp"/>
    <property type="match status" value="1"/>
</dbReference>
<dbReference type="PANTHER" id="PTHR32315">
    <property type="entry name" value="ADENINE PHOSPHORIBOSYLTRANSFERASE"/>
    <property type="match status" value="1"/>
</dbReference>
<dbReference type="PANTHER" id="PTHR32315:SF4">
    <property type="entry name" value="URACIL PHOSPHORIBOSYLTRANSFERASE, CHLOROPLASTIC"/>
    <property type="match status" value="1"/>
</dbReference>
<dbReference type="Pfam" id="PF14681">
    <property type="entry name" value="UPRTase"/>
    <property type="match status" value="1"/>
</dbReference>
<dbReference type="SUPFAM" id="SSF53271">
    <property type="entry name" value="PRTase-like"/>
    <property type="match status" value="1"/>
</dbReference>
<protein>
    <recommendedName>
        <fullName evidence="1">Uracil phosphoribosyltransferase</fullName>
        <ecNumber evidence="1">2.4.2.9</ecNumber>
    </recommendedName>
    <alternativeName>
        <fullName evidence="1">UMP pyrophosphorylase</fullName>
    </alternativeName>
    <alternativeName>
        <fullName evidence="1">UPRTase</fullName>
    </alternativeName>
</protein>
<name>UPP_BACC2</name>
<feature type="chain" id="PRO_1000139094" description="Uracil phosphoribosyltransferase">
    <location>
        <begin position="1"/>
        <end position="209"/>
    </location>
</feature>
<feature type="binding site" evidence="1">
    <location>
        <position position="79"/>
    </location>
    <ligand>
        <name>5-phospho-alpha-D-ribose 1-diphosphate</name>
        <dbReference type="ChEBI" id="CHEBI:58017"/>
    </ligand>
</feature>
<feature type="binding site" evidence="1">
    <location>
        <position position="104"/>
    </location>
    <ligand>
        <name>5-phospho-alpha-D-ribose 1-diphosphate</name>
        <dbReference type="ChEBI" id="CHEBI:58017"/>
    </ligand>
</feature>
<feature type="binding site" evidence="1">
    <location>
        <begin position="131"/>
        <end position="139"/>
    </location>
    <ligand>
        <name>5-phospho-alpha-D-ribose 1-diphosphate</name>
        <dbReference type="ChEBI" id="CHEBI:58017"/>
    </ligand>
</feature>
<feature type="binding site" evidence="1">
    <location>
        <position position="194"/>
    </location>
    <ligand>
        <name>uracil</name>
        <dbReference type="ChEBI" id="CHEBI:17568"/>
    </ligand>
</feature>
<feature type="binding site" evidence="1">
    <location>
        <begin position="199"/>
        <end position="201"/>
    </location>
    <ligand>
        <name>uracil</name>
        <dbReference type="ChEBI" id="CHEBI:17568"/>
    </ligand>
</feature>
<feature type="binding site" evidence="1">
    <location>
        <position position="200"/>
    </location>
    <ligand>
        <name>5-phospho-alpha-D-ribose 1-diphosphate</name>
        <dbReference type="ChEBI" id="CHEBI:58017"/>
    </ligand>
</feature>
<gene>
    <name evidence="1" type="primary">upp</name>
    <name type="ordered locus">BCG9842_B5514</name>
</gene>
<comment type="function">
    <text evidence="1">Catalyzes the conversion of uracil and 5-phospho-alpha-D-ribose 1-diphosphate (PRPP) to UMP and diphosphate.</text>
</comment>
<comment type="catalytic activity">
    <reaction evidence="1">
        <text>UMP + diphosphate = 5-phospho-alpha-D-ribose 1-diphosphate + uracil</text>
        <dbReference type="Rhea" id="RHEA:13017"/>
        <dbReference type="ChEBI" id="CHEBI:17568"/>
        <dbReference type="ChEBI" id="CHEBI:33019"/>
        <dbReference type="ChEBI" id="CHEBI:57865"/>
        <dbReference type="ChEBI" id="CHEBI:58017"/>
        <dbReference type="EC" id="2.4.2.9"/>
    </reaction>
</comment>
<comment type="cofactor">
    <cofactor evidence="1">
        <name>Mg(2+)</name>
        <dbReference type="ChEBI" id="CHEBI:18420"/>
    </cofactor>
    <text evidence="1">Binds 1 Mg(2+) ion per subunit. The magnesium is bound as Mg-PRPP.</text>
</comment>
<comment type="activity regulation">
    <text evidence="1">Allosterically activated by GTP.</text>
</comment>
<comment type="pathway">
    <text evidence="1">Pyrimidine metabolism; UMP biosynthesis via salvage pathway; UMP from uracil: step 1/1.</text>
</comment>
<comment type="similarity">
    <text evidence="1">Belongs to the UPRTase family.</text>
</comment>
<proteinExistence type="inferred from homology"/>
<keyword id="KW-0021">Allosteric enzyme</keyword>
<keyword id="KW-0328">Glycosyltransferase</keyword>
<keyword id="KW-0342">GTP-binding</keyword>
<keyword id="KW-0460">Magnesium</keyword>
<keyword id="KW-0547">Nucleotide-binding</keyword>
<keyword id="KW-0808">Transferase</keyword>
<evidence type="ECO:0000255" key="1">
    <source>
        <dbReference type="HAMAP-Rule" id="MF_01218"/>
    </source>
</evidence>
<reference key="1">
    <citation type="submission" date="2008-10" db="EMBL/GenBank/DDBJ databases">
        <title>Genome sequence of Bacillus cereus G9842.</title>
        <authorList>
            <person name="Dodson R.J."/>
            <person name="Durkin A.S."/>
            <person name="Rosovitz M.J."/>
            <person name="Rasko D.A."/>
            <person name="Hoffmaster A."/>
            <person name="Ravel J."/>
            <person name="Sutton G."/>
        </authorList>
    </citation>
    <scope>NUCLEOTIDE SEQUENCE [LARGE SCALE GENOMIC DNA]</scope>
    <source>
        <strain>G9842</strain>
    </source>
</reference>
<accession>B7IQW8</accession>
<organism>
    <name type="scientific">Bacillus cereus (strain G9842)</name>
    <dbReference type="NCBI Taxonomy" id="405531"/>
    <lineage>
        <taxon>Bacteria</taxon>
        <taxon>Bacillati</taxon>
        <taxon>Bacillota</taxon>
        <taxon>Bacilli</taxon>
        <taxon>Bacillales</taxon>
        <taxon>Bacillaceae</taxon>
        <taxon>Bacillus</taxon>
        <taxon>Bacillus cereus group</taxon>
    </lineage>
</organism>
<sequence>MGKLYVFDHPLIQHKITYIRDKNTGTKDFRELVDEVASLMAFEITRDLPLKDIEIETPVSKATTKVIAGKKLGLIPILRAGLGMVDGILKLIPAAKVGHVGLYRDPKTLQPVEYYVKLPTDVEERDFIVLDPMLATGGSAAEAINSLKKRGAKQIKLMCIVAAPEGVKVVQEEHPDVDIYVAALDEKLNDHGYVVPGLGDAGDRLFGTK</sequence>